<accession>C1A8V7</accession>
<dbReference type="EC" id="2.7.7.38" evidence="1"/>
<dbReference type="EMBL" id="AP009153">
    <property type="protein sequence ID" value="BAH38667.1"/>
    <property type="molecule type" value="Genomic_DNA"/>
</dbReference>
<dbReference type="RefSeq" id="WP_012683114.1">
    <property type="nucleotide sequence ID" value="NC_012489.1"/>
</dbReference>
<dbReference type="SMR" id="C1A8V7"/>
<dbReference type="STRING" id="379066.GAU_1625"/>
<dbReference type="KEGG" id="gau:GAU_1625"/>
<dbReference type="eggNOG" id="COG1212">
    <property type="taxonomic scope" value="Bacteria"/>
</dbReference>
<dbReference type="HOGENOM" id="CLU_065038_1_0_0"/>
<dbReference type="UniPathway" id="UPA00030"/>
<dbReference type="UniPathway" id="UPA00358">
    <property type="reaction ID" value="UER00476"/>
</dbReference>
<dbReference type="Proteomes" id="UP000002209">
    <property type="component" value="Chromosome"/>
</dbReference>
<dbReference type="GO" id="GO:0005829">
    <property type="term" value="C:cytosol"/>
    <property type="evidence" value="ECO:0007669"/>
    <property type="project" value="TreeGrafter"/>
</dbReference>
<dbReference type="GO" id="GO:0008690">
    <property type="term" value="F:3-deoxy-manno-octulosonate cytidylyltransferase activity"/>
    <property type="evidence" value="ECO:0007669"/>
    <property type="project" value="UniProtKB-UniRule"/>
</dbReference>
<dbReference type="GO" id="GO:0033468">
    <property type="term" value="P:CMP-keto-3-deoxy-D-manno-octulosonic acid biosynthetic process"/>
    <property type="evidence" value="ECO:0007669"/>
    <property type="project" value="UniProtKB-UniRule"/>
</dbReference>
<dbReference type="GO" id="GO:0009103">
    <property type="term" value="P:lipopolysaccharide biosynthetic process"/>
    <property type="evidence" value="ECO:0007669"/>
    <property type="project" value="UniProtKB-UniRule"/>
</dbReference>
<dbReference type="CDD" id="cd02517">
    <property type="entry name" value="CMP-KDO-Synthetase"/>
    <property type="match status" value="1"/>
</dbReference>
<dbReference type="Gene3D" id="3.90.550.10">
    <property type="entry name" value="Spore Coat Polysaccharide Biosynthesis Protein SpsA, Chain A"/>
    <property type="match status" value="1"/>
</dbReference>
<dbReference type="HAMAP" id="MF_00057">
    <property type="entry name" value="KdsB"/>
    <property type="match status" value="1"/>
</dbReference>
<dbReference type="InterPro" id="IPR003329">
    <property type="entry name" value="Cytidylyl_trans"/>
</dbReference>
<dbReference type="InterPro" id="IPR004528">
    <property type="entry name" value="KdsB"/>
</dbReference>
<dbReference type="InterPro" id="IPR029044">
    <property type="entry name" value="Nucleotide-diphossugar_trans"/>
</dbReference>
<dbReference type="NCBIfam" id="TIGR00466">
    <property type="entry name" value="kdsB"/>
    <property type="match status" value="1"/>
</dbReference>
<dbReference type="NCBIfam" id="NF003952">
    <property type="entry name" value="PRK05450.1-5"/>
    <property type="match status" value="1"/>
</dbReference>
<dbReference type="PANTHER" id="PTHR42866">
    <property type="entry name" value="3-DEOXY-MANNO-OCTULOSONATE CYTIDYLYLTRANSFERASE"/>
    <property type="match status" value="1"/>
</dbReference>
<dbReference type="PANTHER" id="PTHR42866:SF2">
    <property type="entry name" value="3-DEOXY-MANNO-OCTULOSONATE CYTIDYLYLTRANSFERASE, MITOCHONDRIAL"/>
    <property type="match status" value="1"/>
</dbReference>
<dbReference type="Pfam" id="PF02348">
    <property type="entry name" value="CTP_transf_3"/>
    <property type="match status" value="1"/>
</dbReference>
<dbReference type="SUPFAM" id="SSF53448">
    <property type="entry name" value="Nucleotide-diphospho-sugar transferases"/>
    <property type="match status" value="1"/>
</dbReference>
<gene>
    <name evidence="1" type="primary">kdsB</name>
    <name type="ordered locus">GAU_1625</name>
</gene>
<keyword id="KW-0963">Cytoplasm</keyword>
<keyword id="KW-0448">Lipopolysaccharide biosynthesis</keyword>
<keyword id="KW-0548">Nucleotidyltransferase</keyword>
<keyword id="KW-1185">Reference proteome</keyword>
<keyword id="KW-0808">Transferase</keyword>
<proteinExistence type="inferred from homology"/>
<protein>
    <recommendedName>
        <fullName evidence="1">3-deoxy-manno-octulosonate cytidylyltransferase</fullName>
        <ecNumber evidence="1">2.7.7.38</ecNumber>
    </recommendedName>
    <alternativeName>
        <fullName evidence="1">CMP-2-keto-3-deoxyoctulosonic acid synthase</fullName>
        <shortName evidence="1">CKS</shortName>
        <shortName evidence="1">CMP-KDO synthase</shortName>
    </alternativeName>
</protein>
<name>KDSB_GEMAT</name>
<evidence type="ECO:0000255" key="1">
    <source>
        <dbReference type="HAMAP-Rule" id="MF_00057"/>
    </source>
</evidence>
<comment type="function">
    <text evidence="1">Activates KDO (a required 8-carbon sugar) for incorporation into bacterial lipopolysaccharide in Gram-negative bacteria.</text>
</comment>
<comment type="catalytic activity">
    <reaction evidence="1">
        <text>3-deoxy-alpha-D-manno-oct-2-ulosonate + CTP = CMP-3-deoxy-beta-D-manno-octulosonate + diphosphate</text>
        <dbReference type="Rhea" id="RHEA:23448"/>
        <dbReference type="ChEBI" id="CHEBI:33019"/>
        <dbReference type="ChEBI" id="CHEBI:37563"/>
        <dbReference type="ChEBI" id="CHEBI:85986"/>
        <dbReference type="ChEBI" id="CHEBI:85987"/>
        <dbReference type="EC" id="2.7.7.38"/>
    </reaction>
</comment>
<comment type="pathway">
    <text evidence="1">Nucleotide-sugar biosynthesis; CMP-3-deoxy-D-manno-octulosonate biosynthesis; CMP-3-deoxy-D-manno-octulosonate from 3-deoxy-D-manno-octulosonate and CTP: step 1/1.</text>
</comment>
<comment type="pathway">
    <text evidence="1">Bacterial outer membrane biogenesis; lipopolysaccharide biosynthesis.</text>
</comment>
<comment type="subcellular location">
    <subcellularLocation>
        <location evidence="1">Cytoplasm</location>
    </subcellularLocation>
</comment>
<comment type="similarity">
    <text evidence="1">Belongs to the KdsB family.</text>
</comment>
<organism>
    <name type="scientific">Gemmatimonas aurantiaca (strain DSM 14586 / JCM 11422 / NBRC 100505 / T-27)</name>
    <dbReference type="NCBI Taxonomy" id="379066"/>
    <lineage>
        <taxon>Bacteria</taxon>
        <taxon>Pseudomonadati</taxon>
        <taxon>Gemmatimonadota</taxon>
        <taxon>Gemmatimonadia</taxon>
        <taxon>Gemmatimonadales</taxon>
        <taxon>Gemmatimonadaceae</taxon>
        <taxon>Gemmatimonas</taxon>
    </lineage>
</organism>
<sequence>MPVLAVIPARLGATRLPRKPLRLLGGEPIVVRVYQRVVQLGVADHCVVATDHPEVQEACARHGIPVVMTRADHPSGTDRVAEVAAQPEFSSFDVLLNVQGDEPFVSREALAGAVEIVTSGLAPIGTAAVPVSVDTLQRPDVVKVVCADDRRALYFSRAAIPFLRDASDAAVLAPLVRQHVGVYAYARQALQQWVSWPPHPLELIERLEQLRPLAHGLSIGVTTVAATEGGIDTEDDLVRANTHWDVLHAANSSAYRSA</sequence>
<reference key="1">
    <citation type="submission" date="2006-03" db="EMBL/GenBank/DDBJ databases">
        <title>Complete genome sequence of Gemmatimonas aurantiaca T-27 that represents a novel phylum Gemmatimonadetes.</title>
        <authorList>
            <person name="Takasaki K."/>
            <person name="Ichikawa N."/>
            <person name="Miura H."/>
            <person name="Matsushita S."/>
            <person name="Watanabe Y."/>
            <person name="Oguchi A."/>
            <person name="Ankai A."/>
            <person name="Yashiro I."/>
            <person name="Takahashi M."/>
            <person name="Terui Y."/>
            <person name="Fukui S."/>
            <person name="Yokoyama H."/>
            <person name="Tanikawa S."/>
            <person name="Hanada S."/>
            <person name="Kamagata Y."/>
            <person name="Fujita N."/>
        </authorList>
    </citation>
    <scope>NUCLEOTIDE SEQUENCE [LARGE SCALE GENOMIC DNA]</scope>
    <source>
        <strain>DSM 14586 / JCM 11422 / NBRC 100505 / T-27</strain>
    </source>
</reference>
<feature type="chain" id="PRO_1000202342" description="3-deoxy-manno-octulosonate cytidylyltransferase">
    <location>
        <begin position="1"/>
        <end position="258"/>
    </location>
</feature>